<accession>Q8U0U0</accession>
<organism>
    <name type="scientific">Pyrococcus furiosus (strain ATCC 43587 / DSM 3638 / JCM 8422 / Vc1)</name>
    <dbReference type="NCBI Taxonomy" id="186497"/>
    <lineage>
        <taxon>Archaea</taxon>
        <taxon>Methanobacteriati</taxon>
        <taxon>Methanobacteriota</taxon>
        <taxon>Thermococci</taxon>
        <taxon>Thermococcales</taxon>
        <taxon>Thermococcaceae</taxon>
        <taxon>Pyrococcus</taxon>
    </lineage>
</organism>
<gene>
    <name evidence="1" type="primary">gcvH</name>
    <name type="ordered locus">PF1492</name>
</gene>
<sequence>MIEVGEYKIKEGLYYTKEHEWVQVLEDGTVLVGITDYAQKELGDLAYVELPEVGKVVEKGDVLCEVESVKAVSEVYAPVSGEVIEVNEELADSPEKINEDPYEAWIAKIKPKNLEEELKELMDAKAYAEYLKTL</sequence>
<dbReference type="EMBL" id="AE009950">
    <property type="protein sequence ID" value="AAL81616.1"/>
    <property type="molecule type" value="Genomic_DNA"/>
</dbReference>
<dbReference type="RefSeq" id="WP_011012639.1">
    <property type="nucleotide sequence ID" value="NZ_CP023154.1"/>
</dbReference>
<dbReference type="SMR" id="Q8U0U0"/>
<dbReference type="STRING" id="186497.PF1492"/>
<dbReference type="PaxDb" id="186497-PF1492"/>
<dbReference type="GeneID" id="41713307"/>
<dbReference type="KEGG" id="pfu:PF1492"/>
<dbReference type="PATRIC" id="fig|186497.12.peg.1555"/>
<dbReference type="eggNOG" id="arCOG01303">
    <property type="taxonomic scope" value="Archaea"/>
</dbReference>
<dbReference type="HOGENOM" id="CLU_097408_2_1_2"/>
<dbReference type="OrthoDB" id="9810at2157"/>
<dbReference type="PhylomeDB" id="Q8U0U0"/>
<dbReference type="Proteomes" id="UP000001013">
    <property type="component" value="Chromosome"/>
</dbReference>
<dbReference type="GO" id="GO:0005737">
    <property type="term" value="C:cytoplasm"/>
    <property type="evidence" value="ECO:0007669"/>
    <property type="project" value="TreeGrafter"/>
</dbReference>
<dbReference type="GO" id="GO:0005960">
    <property type="term" value="C:glycine cleavage complex"/>
    <property type="evidence" value="ECO:0007669"/>
    <property type="project" value="InterPro"/>
</dbReference>
<dbReference type="GO" id="GO:0019464">
    <property type="term" value="P:glycine decarboxylation via glycine cleavage system"/>
    <property type="evidence" value="ECO:0007669"/>
    <property type="project" value="UniProtKB-UniRule"/>
</dbReference>
<dbReference type="CDD" id="cd06848">
    <property type="entry name" value="GCS_H"/>
    <property type="match status" value="1"/>
</dbReference>
<dbReference type="Gene3D" id="2.40.50.100">
    <property type="match status" value="1"/>
</dbReference>
<dbReference type="HAMAP" id="MF_00272">
    <property type="entry name" value="GcvH"/>
    <property type="match status" value="1"/>
</dbReference>
<dbReference type="InterPro" id="IPR003016">
    <property type="entry name" value="2-oxoA_DH_lipoyl-BS"/>
</dbReference>
<dbReference type="InterPro" id="IPR000089">
    <property type="entry name" value="Biotin_lipoyl"/>
</dbReference>
<dbReference type="InterPro" id="IPR002930">
    <property type="entry name" value="GCV_H"/>
</dbReference>
<dbReference type="InterPro" id="IPR033753">
    <property type="entry name" value="GCV_H/Fam206"/>
</dbReference>
<dbReference type="InterPro" id="IPR017453">
    <property type="entry name" value="GCV_H_sub"/>
</dbReference>
<dbReference type="InterPro" id="IPR011053">
    <property type="entry name" value="Single_hybrid_motif"/>
</dbReference>
<dbReference type="NCBIfam" id="TIGR00527">
    <property type="entry name" value="gcvH"/>
    <property type="match status" value="1"/>
</dbReference>
<dbReference type="NCBIfam" id="NF002270">
    <property type="entry name" value="PRK01202.1"/>
    <property type="match status" value="1"/>
</dbReference>
<dbReference type="PANTHER" id="PTHR11715">
    <property type="entry name" value="GLYCINE CLEAVAGE SYSTEM H PROTEIN"/>
    <property type="match status" value="1"/>
</dbReference>
<dbReference type="PANTHER" id="PTHR11715:SF3">
    <property type="entry name" value="GLYCINE CLEAVAGE SYSTEM H PROTEIN-RELATED"/>
    <property type="match status" value="1"/>
</dbReference>
<dbReference type="Pfam" id="PF01597">
    <property type="entry name" value="GCV_H"/>
    <property type="match status" value="1"/>
</dbReference>
<dbReference type="SUPFAM" id="SSF51230">
    <property type="entry name" value="Single hybrid motif"/>
    <property type="match status" value="1"/>
</dbReference>
<dbReference type="PROSITE" id="PS50968">
    <property type="entry name" value="BIOTINYL_LIPOYL"/>
    <property type="match status" value="1"/>
</dbReference>
<dbReference type="PROSITE" id="PS00189">
    <property type="entry name" value="LIPOYL"/>
    <property type="match status" value="1"/>
</dbReference>
<protein>
    <recommendedName>
        <fullName evidence="1">Probable glycine cleavage system H protein</fullName>
    </recommendedName>
</protein>
<feature type="chain" id="PRO_0000166276" description="Probable glycine cleavage system H protein">
    <location>
        <begin position="1"/>
        <end position="134"/>
    </location>
</feature>
<feature type="domain" description="Lipoyl-binding" evidence="2">
    <location>
        <begin position="29"/>
        <end position="110"/>
    </location>
</feature>
<feature type="modified residue" description="N6-lipoyllysine" evidence="1">
    <location>
        <position position="70"/>
    </location>
</feature>
<keyword id="KW-0450">Lipoyl</keyword>
<keyword id="KW-1185">Reference proteome</keyword>
<evidence type="ECO:0000255" key="1">
    <source>
        <dbReference type="HAMAP-Rule" id="MF_00272"/>
    </source>
</evidence>
<evidence type="ECO:0000255" key="2">
    <source>
        <dbReference type="PROSITE-ProRule" id="PRU01066"/>
    </source>
</evidence>
<reference key="1">
    <citation type="journal article" date="1999" name="Genetics">
        <title>Divergence of the hyperthermophilic archaea Pyrococcus furiosus and P. horikoshii inferred from complete genomic sequences.</title>
        <authorList>
            <person name="Maeder D.L."/>
            <person name="Weiss R.B."/>
            <person name="Dunn D.M."/>
            <person name="Cherry J.L."/>
            <person name="Gonzalez J.M."/>
            <person name="DiRuggiero J."/>
            <person name="Robb F.T."/>
        </authorList>
    </citation>
    <scope>NUCLEOTIDE SEQUENCE [LARGE SCALE GENOMIC DNA]</scope>
    <source>
        <strain>ATCC 43587 / DSM 3638 / JCM 8422 / Vc1</strain>
    </source>
</reference>
<proteinExistence type="inferred from homology"/>
<comment type="function">
    <text evidence="1">The glycine cleavage system catalyzes the degradation of glycine. The H protein shuttles the methylamine group of glycine from the P protein to the T protein.</text>
</comment>
<comment type="cofactor">
    <cofactor evidence="1">
        <name>(R)-lipoate</name>
        <dbReference type="ChEBI" id="CHEBI:83088"/>
    </cofactor>
    <text evidence="1">Binds 1 lipoyl cofactor covalently.</text>
</comment>
<comment type="subunit">
    <text evidence="1">The glycine cleavage system is composed of four proteins: P, T, L and H.</text>
</comment>
<comment type="similarity">
    <text evidence="1">Belongs to the GcvH family.</text>
</comment>
<name>GCSH_PYRFU</name>